<accession>A0L860</accession>
<feature type="chain" id="PRO_1000057175" description="Phosphate acyltransferase">
    <location>
        <begin position="1"/>
        <end position="350"/>
    </location>
</feature>
<protein>
    <recommendedName>
        <fullName evidence="1">Phosphate acyltransferase</fullName>
        <ecNumber evidence="1">2.3.1.274</ecNumber>
    </recommendedName>
    <alternativeName>
        <fullName evidence="1">Acyl-ACP phosphotransacylase</fullName>
    </alternativeName>
    <alternativeName>
        <fullName evidence="1">Acyl-[acyl-carrier-protein]--phosphate acyltransferase</fullName>
    </alternativeName>
    <alternativeName>
        <fullName evidence="1">Phosphate-acyl-ACP acyltransferase</fullName>
    </alternativeName>
</protein>
<sequence length="350" mass="37666">MTVRIALDAMGGDNAPRAVIEGMLEVQKKRPEVVFTLVGIESRIRQELEQMGVEEDGFRIWHASEVVEMDEKPAVALRTKKDSSMRVGANLVKENQVDAFVSAGNTGALMATAKFVLKTLRGIDRPAIASVIPAVGGETLMLDLGANVDCSSEHLCQFALMGSIFANAVLGVRAPRVGLLNIGEEDTKGNEQVRDAGEQLKARSATLIPGGSYVGNVEGTDIFKDTVDVVVCDGFVGNVSLKSIEGTAKMLTHYLRGAFTKNWKTKLMYLIARPALRCFRDEMDPRKHNGAILLGLNGVVVKSHGGADSVAYAHAIHVAVDLAEKQVTKRIRDAVAKFRAEGTQPSDPAV</sequence>
<dbReference type="EC" id="2.3.1.274" evidence="1"/>
<dbReference type="EMBL" id="CP000471">
    <property type="protein sequence ID" value="ABK44153.1"/>
    <property type="molecule type" value="Genomic_DNA"/>
</dbReference>
<dbReference type="RefSeq" id="WP_011713301.1">
    <property type="nucleotide sequence ID" value="NC_008576.1"/>
</dbReference>
<dbReference type="SMR" id="A0L860"/>
<dbReference type="STRING" id="156889.Mmc1_1644"/>
<dbReference type="KEGG" id="mgm:Mmc1_1644"/>
<dbReference type="eggNOG" id="COG0416">
    <property type="taxonomic scope" value="Bacteria"/>
</dbReference>
<dbReference type="HOGENOM" id="CLU_039379_1_0_5"/>
<dbReference type="OrthoDB" id="9806408at2"/>
<dbReference type="UniPathway" id="UPA00085"/>
<dbReference type="Proteomes" id="UP000002586">
    <property type="component" value="Chromosome"/>
</dbReference>
<dbReference type="GO" id="GO:0005737">
    <property type="term" value="C:cytoplasm"/>
    <property type="evidence" value="ECO:0007669"/>
    <property type="project" value="UniProtKB-SubCell"/>
</dbReference>
<dbReference type="GO" id="GO:0043811">
    <property type="term" value="F:phosphate:acyl-[acyl carrier protein] acyltransferase activity"/>
    <property type="evidence" value="ECO:0007669"/>
    <property type="project" value="UniProtKB-UniRule"/>
</dbReference>
<dbReference type="GO" id="GO:0006633">
    <property type="term" value="P:fatty acid biosynthetic process"/>
    <property type="evidence" value="ECO:0007669"/>
    <property type="project" value="UniProtKB-UniRule"/>
</dbReference>
<dbReference type="GO" id="GO:0008654">
    <property type="term" value="P:phospholipid biosynthetic process"/>
    <property type="evidence" value="ECO:0007669"/>
    <property type="project" value="UniProtKB-KW"/>
</dbReference>
<dbReference type="Gene3D" id="3.40.718.10">
    <property type="entry name" value="Isopropylmalate Dehydrogenase"/>
    <property type="match status" value="1"/>
</dbReference>
<dbReference type="HAMAP" id="MF_00019">
    <property type="entry name" value="PlsX"/>
    <property type="match status" value="1"/>
</dbReference>
<dbReference type="InterPro" id="IPR003664">
    <property type="entry name" value="FA_synthesis"/>
</dbReference>
<dbReference type="InterPro" id="IPR012281">
    <property type="entry name" value="Phospholipid_synth_PlsX-like"/>
</dbReference>
<dbReference type="NCBIfam" id="TIGR00182">
    <property type="entry name" value="plsX"/>
    <property type="match status" value="1"/>
</dbReference>
<dbReference type="PANTHER" id="PTHR30100">
    <property type="entry name" value="FATTY ACID/PHOSPHOLIPID SYNTHESIS PROTEIN PLSX"/>
    <property type="match status" value="1"/>
</dbReference>
<dbReference type="PANTHER" id="PTHR30100:SF1">
    <property type="entry name" value="PHOSPHATE ACYLTRANSFERASE"/>
    <property type="match status" value="1"/>
</dbReference>
<dbReference type="Pfam" id="PF02504">
    <property type="entry name" value="FA_synthesis"/>
    <property type="match status" value="1"/>
</dbReference>
<dbReference type="PIRSF" id="PIRSF002465">
    <property type="entry name" value="Phsphlp_syn_PlsX"/>
    <property type="match status" value="1"/>
</dbReference>
<dbReference type="SUPFAM" id="SSF53659">
    <property type="entry name" value="Isocitrate/Isopropylmalate dehydrogenase-like"/>
    <property type="match status" value="1"/>
</dbReference>
<evidence type="ECO:0000255" key="1">
    <source>
        <dbReference type="HAMAP-Rule" id="MF_00019"/>
    </source>
</evidence>
<reference key="1">
    <citation type="journal article" date="2009" name="Appl. Environ. Microbiol.">
        <title>Complete genome sequence of the chemolithoautotrophic marine magnetotactic coccus strain MC-1.</title>
        <authorList>
            <person name="Schubbe S."/>
            <person name="Williams T.J."/>
            <person name="Xie G."/>
            <person name="Kiss H.E."/>
            <person name="Brettin T.S."/>
            <person name="Martinez D."/>
            <person name="Ross C.A."/>
            <person name="Schuler D."/>
            <person name="Cox B.L."/>
            <person name="Nealson K.H."/>
            <person name="Bazylinski D.A."/>
        </authorList>
    </citation>
    <scope>NUCLEOTIDE SEQUENCE [LARGE SCALE GENOMIC DNA]</scope>
    <source>
        <strain>ATCC BAA-1437 / JCM 17883 / MC-1</strain>
    </source>
</reference>
<organism>
    <name type="scientific">Magnetococcus marinus (strain ATCC BAA-1437 / JCM 17883 / MC-1)</name>
    <dbReference type="NCBI Taxonomy" id="156889"/>
    <lineage>
        <taxon>Bacteria</taxon>
        <taxon>Pseudomonadati</taxon>
        <taxon>Pseudomonadota</taxon>
        <taxon>Alphaproteobacteria</taxon>
        <taxon>Magnetococcales</taxon>
        <taxon>Magnetococcaceae</taxon>
        <taxon>Magnetococcus</taxon>
    </lineage>
</organism>
<keyword id="KW-0963">Cytoplasm</keyword>
<keyword id="KW-0444">Lipid biosynthesis</keyword>
<keyword id="KW-0443">Lipid metabolism</keyword>
<keyword id="KW-0594">Phospholipid biosynthesis</keyword>
<keyword id="KW-1208">Phospholipid metabolism</keyword>
<keyword id="KW-1185">Reference proteome</keyword>
<keyword id="KW-0808">Transferase</keyword>
<comment type="function">
    <text evidence="1">Catalyzes the reversible formation of acyl-phosphate (acyl-PO(4)) from acyl-[acyl-carrier-protein] (acyl-ACP). This enzyme utilizes acyl-ACP as fatty acyl donor, but not acyl-CoA.</text>
</comment>
<comment type="catalytic activity">
    <reaction evidence="1">
        <text>a fatty acyl-[ACP] + phosphate = an acyl phosphate + holo-[ACP]</text>
        <dbReference type="Rhea" id="RHEA:42292"/>
        <dbReference type="Rhea" id="RHEA-COMP:9685"/>
        <dbReference type="Rhea" id="RHEA-COMP:14125"/>
        <dbReference type="ChEBI" id="CHEBI:43474"/>
        <dbReference type="ChEBI" id="CHEBI:59918"/>
        <dbReference type="ChEBI" id="CHEBI:64479"/>
        <dbReference type="ChEBI" id="CHEBI:138651"/>
        <dbReference type="EC" id="2.3.1.274"/>
    </reaction>
</comment>
<comment type="pathway">
    <text evidence="1">Lipid metabolism; phospholipid metabolism.</text>
</comment>
<comment type="subunit">
    <text evidence="1">Homodimer. Probably interacts with PlsY.</text>
</comment>
<comment type="subcellular location">
    <subcellularLocation>
        <location evidence="1">Cytoplasm</location>
    </subcellularLocation>
    <text evidence="1">Associated with the membrane possibly through PlsY.</text>
</comment>
<comment type="similarity">
    <text evidence="1">Belongs to the PlsX family.</text>
</comment>
<name>PLSX_MAGMM</name>
<proteinExistence type="inferred from homology"/>
<gene>
    <name evidence="1" type="primary">plsX</name>
    <name type="ordered locus">Mmc1_1644</name>
</gene>